<protein>
    <recommendedName>
        <fullName>Phosphoribosylamine--glycine ligase, chloroplastic</fullName>
        <ecNumber>6.3.4.13</ecNumber>
    </recommendedName>
    <alternativeName>
        <fullName>Glycinamide ribonucleotide synthetase</fullName>
        <shortName>GARS</shortName>
    </alternativeName>
    <alternativeName>
        <fullName>Phosphoribosylglycinamide synthetase</fullName>
    </alternativeName>
</protein>
<dbReference type="EC" id="6.3.4.13"/>
<dbReference type="EMBL" id="X74766">
    <property type="protein sequence ID" value="CAA52778.2"/>
    <property type="status" value="ALT_INIT"/>
    <property type="molecule type" value="mRNA"/>
</dbReference>
<dbReference type="EMBL" id="AC000132">
    <property type="protein sequence ID" value="AAB60737.1"/>
    <property type="molecule type" value="Genomic_DNA"/>
</dbReference>
<dbReference type="EMBL" id="CP002684">
    <property type="protein sequence ID" value="AEE28500.1"/>
    <property type="molecule type" value="Genomic_DNA"/>
</dbReference>
<dbReference type="EMBL" id="AY050820">
    <property type="protein sequence ID" value="AAK92755.1"/>
    <property type="molecule type" value="mRNA"/>
</dbReference>
<dbReference type="EMBL" id="AY091422">
    <property type="protein sequence ID" value="AAM14361.1"/>
    <property type="molecule type" value="mRNA"/>
</dbReference>
<dbReference type="PIR" id="E86232">
    <property type="entry name" value="E86232"/>
</dbReference>
<dbReference type="PIR" id="S37104">
    <property type="entry name" value="S37104"/>
</dbReference>
<dbReference type="RefSeq" id="NP_172454.1">
    <property type="nucleotide sequence ID" value="NM_100857.4"/>
</dbReference>
<dbReference type="SMR" id="P52420"/>
<dbReference type="BioGRID" id="22756">
    <property type="interactions" value="6"/>
</dbReference>
<dbReference type="FunCoup" id="P52420">
    <property type="interactions" value="795"/>
</dbReference>
<dbReference type="IntAct" id="P52420">
    <property type="interactions" value="3"/>
</dbReference>
<dbReference type="STRING" id="3702.P52420"/>
<dbReference type="PaxDb" id="3702-AT1G09830.1"/>
<dbReference type="ProteomicsDB" id="224868"/>
<dbReference type="EnsemblPlants" id="AT1G09830.1">
    <property type="protein sequence ID" value="AT1G09830.1"/>
    <property type="gene ID" value="AT1G09830"/>
</dbReference>
<dbReference type="GeneID" id="837515"/>
<dbReference type="Gramene" id="AT1G09830.1">
    <property type="protein sequence ID" value="AT1G09830.1"/>
    <property type="gene ID" value="AT1G09830"/>
</dbReference>
<dbReference type="KEGG" id="ath:AT1G09830"/>
<dbReference type="Araport" id="AT1G09830"/>
<dbReference type="TAIR" id="AT1G09830">
    <property type="gene designation" value="PUR2"/>
</dbReference>
<dbReference type="eggNOG" id="KOG0237">
    <property type="taxonomic scope" value="Eukaryota"/>
</dbReference>
<dbReference type="HOGENOM" id="CLU_027420_3_1_1"/>
<dbReference type="InParanoid" id="P52420"/>
<dbReference type="OMA" id="KATVCKY"/>
<dbReference type="PhylomeDB" id="P52420"/>
<dbReference type="BioCyc" id="ARA:AT1G09830-MONOMER"/>
<dbReference type="UniPathway" id="UPA00074">
    <property type="reaction ID" value="UER00125"/>
</dbReference>
<dbReference type="PRO" id="PR:P52420"/>
<dbReference type="Proteomes" id="UP000006548">
    <property type="component" value="Chromosome 1"/>
</dbReference>
<dbReference type="ExpressionAtlas" id="P52420">
    <property type="expression patterns" value="baseline and differential"/>
</dbReference>
<dbReference type="GO" id="GO:0009507">
    <property type="term" value="C:chloroplast"/>
    <property type="evidence" value="ECO:0007005"/>
    <property type="project" value="TAIR"/>
</dbReference>
<dbReference type="GO" id="GO:0009570">
    <property type="term" value="C:chloroplast stroma"/>
    <property type="evidence" value="ECO:0007005"/>
    <property type="project" value="TAIR"/>
</dbReference>
<dbReference type="GO" id="GO:0005524">
    <property type="term" value="F:ATP binding"/>
    <property type="evidence" value="ECO:0007669"/>
    <property type="project" value="UniProtKB-KW"/>
</dbReference>
<dbReference type="GO" id="GO:0046872">
    <property type="term" value="F:metal ion binding"/>
    <property type="evidence" value="ECO:0007669"/>
    <property type="project" value="InterPro"/>
</dbReference>
<dbReference type="GO" id="GO:0004637">
    <property type="term" value="F:phosphoribosylamine-glycine ligase activity"/>
    <property type="evidence" value="ECO:0007669"/>
    <property type="project" value="UniProtKB-EC"/>
</dbReference>
<dbReference type="GO" id="GO:0006189">
    <property type="term" value="P:'de novo' IMP biosynthetic process"/>
    <property type="evidence" value="ECO:0007669"/>
    <property type="project" value="UniProtKB-UniPathway"/>
</dbReference>
<dbReference type="GO" id="GO:0009113">
    <property type="term" value="P:purine nucleobase biosynthetic process"/>
    <property type="evidence" value="ECO:0007669"/>
    <property type="project" value="InterPro"/>
</dbReference>
<dbReference type="FunFam" id="3.30.470.20:FF:000031">
    <property type="entry name" value="Phosphoribosylamine--glycine ligase"/>
    <property type="match status" value="1"/>
</dbReference>
<dbReference type="FunFam" id="3.30.1490.20:FF:000006">
    <property type="entry name" value="phosphoribosylamine--glycine ligase, chloroplastic-like"/>
    <property type="match status" value="1"/>
</dbReference>
<dbReference type="FunFam" id="3.90.600.10:FF:000001">
    <property type="entry name" value="Trifunctional purine biosynthetic protein adenosine-3"/>
    <property type="match status" value="1"/>
</dbReference>
<dbReference type="Gene3D" id="3.40.50.20">
    <property type="match status" value="1"/>
</dbReference>
<dbReference type="Gene3D" id="3.30.1490.20">
    <property type="entry name" value="ATP-grasp fold, A domain"/>
    <property type="match status" value="1"/>
</dbReference>
<dbReference type="Gene3D" id="3.30.470.20">
    <property type="entry name" value="ATP-grasp fold, B domain"/>
    <property type="match status" value="1"/>
</dbReference>
<dbReference type="Gene3D" id="3.90.600.10">
    <property type="entry name" value="Phosphoribosylglycinamide synthetase, C-terminal domain"/>
    <property type="match status" value="1"/>
</dbReference>
<dbReference type="HAMAP" id="MF_00138">
    <property type="entry name" value="GARS"/>
    <property type="match status" value="1"/>
</dbReference>
<dbReference type="InterPro" id="IPR011761">
    <property type="entry name" value="ATP-grasp"/>
</dbReference>
<dbReference type="InterPro" id="IPR013815">
    <property type="entry name" value="ATP_grasp_subdomain_1"/>
</dbReference>
<dbReference type="InterPro" id="IPR016185">
    <property type="entry name" value="PreATP-grasp_dom_sf"/>
</dbReference>
<dbReference type="InterPro" id="IPR020561">
    <property type="entry name" value="PRibGlycinamid_synth_ATP-grasp"/>
</dbReference>
<dbReference type="InterPro" id="IPR000115">
    <property type="entry name" value="PRibGlycinamide_synth"/>
</dbReference>
<dbReference type="InterPro" id="IPR020560">
    <property type="entry name" value="PRibGlycinamide_synth_C-dom"/>
</dbReference>
<dbReference type="InterPro" id="IPR037123">
    <property type="entry name" value="PRibGlycinamide_synth_C_sf"/>
</dbReference>
<dbReference type="InterPro" id="IPR020559">
    <property type="entry name" value="PRibGlycinamide_synth_CS"/>
</dbReference>
<dbReference type="InterPro" id="IPR020562">
    <property type="entry name" value="PRibGlycinamide_synth_N"/>
</dbReference>
<dbReference type="InterPro" id="IPR011054">
    <property type="entry name" value="Rudment_hybrid_motif"/>
</dbReference>
<dbReference type="NCBIfam" id="TIGR00877">
    <property type="entry name" value="purD"/>
    <property type="match status" value="1"/>
</dbReference>
<dbReference type="PANTHER" id="PTHR43472">
    <property type="entry name" value="PHOSPHORIBOSYLAMINE--GLYCINE LIGASE"/>
    <property type="match status" value="1"/>
</dbReference>
<dbReference type="PANTHER" id="PTHR43472:SF1">
    <property type="entry name" value="PHOSPHORIBOSYLAMINE--GLYCINE LIGASE, CHLOROPLASTIC"/>
    <property type="match status" value="1"/>
</dbReference>
<dbReference type="Pfam" id="PF01071">
    <property type="entry name" value="GARS_A"/>
    <property type="match status" value="1"/>
</dbReference>
<dbReference type="Pfam" id="PF02843">
    <property type="entry name" value="GARS_C"/>
    <property type="match status" value="1"/>
</dbReference>
<dbReference type="Pfam" id="PF02844">
    <property type="entry name" value="GARS_N"/>
    <property type="match status" value="1"/>
</dbReference>
<dbReference type="SMART" id="SM01209">
    <property type="entry name" value="GARS_A"/>
    <property type="match status" value="1"/>
</dbReference>
<dbReference type="SMART" id="SM01210">
    <property type="entry name" value="GARS_C"/>
    <property type="match status" value="1"/>
</dbReference>
<dbReference type="SUPFAM" id="SSF56059">
    <property type="entry name" value="Glutathione synthetase ATP-binding domain-like"/>
    <property type="match status" value="1"/>
</dbReference>
<dbReference type="SUPFAM" id="SSF52440">
    <property type="entry name" value="PreATP-grasp domain"/>
    <property type="match status" value="1"/>
</dbReference>
<dbReference type="SUPFAM" id="SSF51246">
    <property type="entry name" value="Rudiment single hybrid motif"/>
    <property type="match status" value="1"/>
</dbReference>
<dbReference type="PROSITE" id="PS50975">
    <property type="entry name" value="ATP_GRASP"/>
    <property type="match status" value="1"/>
</dbReference>
<dbReference type="PROSITE" id="PS00184">
    <property type="entry name" value="GARS"/>
    <property type="match status" value="1"/>
</dbReference>
<sequence>MSSLCASNCYPSSSSINLFSNNNNPTKPFLLSLRFASSNSLPFVAPLKFSTTNHVLSNSRFSSNRIQRRLFLLRCVSEESQPSLSIGNGGSEERVNVLVIGGGGREHALCHALKRSPSCDSVLCAPGNAGISSSGDATCVPDLDISDSLAVISFCQKWNVGLVVVGPEVPLVAGLANDLVKAGILTFGPSSQAAALEGSKNFMKNLCHKYNIPTAKYKTFSDASAAKEYIQEQGAPIVIKADGLAAGKGVTVAMELEEAFEAVDSMLVKGVFGSAGCQVVVEEFLEGEEASFFALVDGENAIPLESAQDHKRVGDGDTGPNTGGMGAYSPAPVLTKELQDFVMESIIHPTVKGMAEEGCKFVGVLFAGLMIEKKSGLPKLIEFNVRFGDPECQVLMMRLESDLAKVLLAACKGELSGVSLDWSKDSAMVVVMASNGYPGSYEKGSIIKNLEEAERVAPGVKVFHAGTGLDSEGNVVATGGRVLGVTAKGKDLEEARERAYSAVQQINWPGGFFRHDIGWRALRQKQVATKEE</sequence>
<organism>
    <name type="scientific">Arabidopsis thaliana</name>
    <name type="common">Mouse-ear cress</name>
    <dbReference type="NCBI Taxonomy" id="3702"/>
    <lineage>
        <taxon>Eukaryota</taxon>
        <taxon>Viridiplantae</taxon>
        <taxon>Streptophyta</taxon>
        <taxon>Embryophyta</taxon>
        <taxon>Tracheophyta</taxon>
        <taxon>Spermatophyta</taxon>
        <taxon>Magnoliopsida</taxon>
        <taxon>eudicotyledons</taxon>
        <taxon>Gunneridae</taxon>
        <taxon>Pentapetalae</taxon>
        <taxon>rosids</taxon>
        <taxon>malvids</taxon>
        <taxon>Brassicales</taxon>
        <taxon>Brassicaceae</taxon>
        <taxon>Camelineae</taxon>
        <taxon>Arabidopsis</taxon>
    </lineage>
</organism>
<evidence type="ECO:0000305" key="1"/>
<proteinExistence type="evidence at transcript level"/>
<gene>
    <name type="primary">PUR2</name>
    <name type="ordered locus">At1g09830</name>
    <name type="ORF">F21M12.22</name>
</gene>
<reference key="1">
    <citation type="journal article" date="1994" name="Plant J.">
        <title>Molecular characterization of Arabidopsis thaliana cDNAs encoding three purine biosynthetic enzymes.</title>
        <authorList>
            <person name="Schnorr K.M."/>
            <person name="Nygaard P."/>
            <person name="Laloue M."/>
        </authorList>
    </citation>
    <scope>NUCLEOTIDE SEQUENCE [MRNA]</scope>
    <source>
        <strain>cv. Columbia</strain>
    </source>
</reference>
<reference key="2">
    <citation type="journal article" date="2000" name="Nature">
        <title>Sequence and analysis of chromosome 1 of the plant Arabidopsis thaliana.</title>
        <authorList>
            <person name="Theologis A."/>
            <person name="Ecker J.R."/>
            <person name="Palm C.J."/>
            <person name="Federspiel N.A."/>
            <person name="Kaul S."/>
            <person name="White O."/>
            <person name="Alonso J."/>
            <person name="Altafi H."/>
            <person name="Araujo R."/>
            <person name="Bowman C.L."/>
            <person name="Brooks S.Y."/>
            <person name="Buehler E."/>
            <person name="Chan A."/>
            <person name="Chao Q."/>
            <person name="Chen H."/>
            <person name="Cheuk R.F."/>
            <person name="Chin C.W."/>
            <person name="Chung M.K."/>
            <person name="Conn L."/>
            <person name="Conway A.B."/>
            <person name="Conway A.R."/>
            <person name="Creasy T.H."/>
            <person name="Dewar K."/>
            <person name="Dunn P."/>
            <person name="Etgu P."/>
            <person name="Feldblyum T.V."/>
            <person name="Feng J.-D."/>
            <person name="Fong B."/>
            <person name="Fujii C.Y."/>
            <person name="Gill J.E."/>
            <person name="Goldsmith A.D."/>
            <person name="Haas B."/>
            <person name="Hansen N.F."/>
            <person name="Hughes B."/>
            <person name="Huizar L."/>
            <person name="Hunter J.L."/>
            <person name="Jenkins J."/>
            <person name="Johnson-Hopson C."/>
            <person name="Khan S."/>
            <person name="Khaykin E."/>
            <person name="Kim C.J."/>
            <person name="Koo H.L."/>
            <person name="Kremenetskaia I."/>
            <person name="Kurtz D.B."/>
            <person name="Kwan A."/>
            <person name="Lam B."/>
            <person name="Langin-Hooper S."/>
            <person name="Lee A."/>
            <person name="Lee J.M."/>
            <person name="Lenz C.A."/>
            <person name="Li J.H."/>
            <person name="Li Y.-P."/>
            <person name="Lin X."/>
            <person name="Liu S.X."/>
            <person name="Liu Z.A."/>
            <person name="Luros J.S."/>
            <person name="Maiti R."/>
            <person name="Marziali A."/>
            <person name="Militscher J."/>
            <person name="Miranda M."/>
            <person name="Nguyen M."/>
            <person name="Nierman W.C."/>
            <person name="Osborne B.I."/>
            <person name="Pai G."/>
            <person name="Peterson J."/>
            <person name="Pham P.K."/>
            <person name="Rizzo M."/>
            <person name="Rooney T."/>
            <person name="Rowley D."/>
            <person name="Sakano H."/>
            <person name="Salzberg S.L."/>
            <person name="Schwartz J.R."/>
            <person name="Shinn P."/>
            <person name="Southwick A.M."/>
            <person name="Sun H."/>
            <person name="Tallon L.J."/>
            <person name="Tambunga G."/>
            <person name="Toriumi M.J."/>
            <person name="Town C.D."/>
            <person name="Utterback T."/>
            <person name="Van Aken S."/>
            <person name="Vaysberg M."/>
            <person name="Vysotskaia V.S."/>
            <person name="Walker M."/>
            <person name="Wu D."/>
            <person name="Yu G."/>
            <person name="Fraser C.M."/>
            <person name="Venter J.C."/>
            <person name="Davis R.W."/>
        </authorList>
    </citation>
    <scope>NUCLEOTIDE SEQUENCE [LARGE SCALE GENOMIC DNA]</scope>
    <source>
        <strain>cv. Columbia</strain>
    </source>
</reference>
<reference key="3">
    <citation type="journal article" date="2017" name="Plant J.">
        <title>Araport11: a complete reannotation of the Arabidopsis thaliana reference genome.</title>
        <authorList>
            <person name="Cheng C.Y."/>
            <person name="Krishnakumar V."/>
            <person name="Chan A.P."/>
            <person name="Thibaud-Nissen F."/>
            <person name="Schobel S."/>
            <person name="Town C.D."/>
        </authorList>
    </citation>
    <scope>GENOME REANNOTATION</scope>
    <source>
        <strain>cv. Columbia</strain>
    </source>
</reference>
<reference key="4">
    <citation type="journal article" date="2003" name="Science">
        <title>Empirical analysis of transcriptional activity in the Arabidopsis genome.</title>
        <authorList>
            <person name="Yamada K."/>
            <person name="Lim J."/>
            <person name="Dale J.M."/>
            <person name="Chen H."/>
            <person name="Shinn P."/>
            <person name="Palm C.J."/>
            <person name="Southwick A.M."/>
            <person name="Wu H.C."/>
            <person name="Kim C.J."/>
            <person name="Nguyen M."/>
            <person name="Pham P.K."/>
            <person name="Cheuk R.F."/>
            <person name="Karlin-Newmann G."/>
            <person name="Liu S.X."/>
            <person name="Lam B."/>
            <person name="Sakano H."/>
            <person name="Wu T."/>
            <person name="Yu G."/>
            <person name="Miranda M."/>
            <person name="Quach H.L."/>
            <person name="Tripp M."/>
            <person name="Chang C.H."/>
            <person name="Lee J.M."/>
            <person name="Toriumi M.J."/>
            <person name="Chan M.M."/>
            <person name="Tang C.C."/>
            <person name="Onodera C.S."/>
            <person name="Deng J.M."/>
            <person name="Akiyama K."/>
            <person name="Ansari Y."/>
            <person name="Arakawa T."/>
            <person name="Banh J."/>
            <person name="Banno F."/>
            <person name="Bowser L."/>
            <person name="Brooks S.Y."/>
            <person name="Carninci P."/>
            <person name="Chao Q."/>
            <person name="Choy N."/>
            <person name="Enju A."/>
            <person name="Goldsmith A.D."/>
            <person name="Gurjal M."/>
            <person name="Hansen N.F."/>
            <person name="Hayashizaki Y."/>
            <person name="Johnson-Hopson C."/>
            <person name="Hsuan V.W."/>
            <person name="Iida K."/>
            <person name="Karnes M."/>
            <person name="Khan S."/>
            <person name="Koesema E."/>
            <person name="Ishida J."/>
            <person name="Jiang P.X."/>
            <person name="Jones T."/>
            <person name="Kawai J."/>
            <person name="Kamiya A."/>
            <person name="Meyers C."/>
            <person name="Nakajima M."/>
            <person name="Narusaka M."/>
            <person name="Seki M."/>
            <person name="Sakurai T."/>
            <person name="Satou M."/>
            <person name="Tamse R."/>
            <person name="Vaysberg M."/>
            <person name="Wallender E.K."/>
            <person name="Wong C."/>
            <person name="Yamamura Y."/>
            <person name="Yuan S."/>
            <person name="Shinozaki K."/>
            <person name="Davis R.W."/>
            <person name="Theologis A."/>
            <person name="Ecker J.R."/>
        </authorList>
    </citation>
    <scope>NUCLEOTIDE SEQUENCE [LARGE SCALE MRNA]</scope>
    <source>
        <strain>cv. Columbia</strain>
    </source>
</reference>
<name>PUR2_ARATH</name>
<accession>P52420</accession>
<accession>O04505</accession>
<comment type="catalytic activity">
    <reaction>
        <text>5-phospho-beta-D-ribosylamine + glycine + ATP = N(1)-(5-phospho-beta-D-ribosyl)glycinamide + ADP + phosphate + H(+)</text>
        <dbReference type="Rhea" id="RHEA:17453"/>
        <dbReference type="ChEBI" id="CHEBI:15378"/>
        <dbReference type="ChEBI" id="CHEBI:30616"/>
        <dbReference type="ChEBI" id="CHEBI:43474"/>
        <dbReference type="ChEBI" id="CHEBI:57305"/>
        <dbReference type="ChEBI" id="CHEBI:58681"/>
        <dbReference type="ChEBI" id="CHEBI:143788"/>
        <dbReference type="ChEBI" id="CHEBI:456216"/>
        <dbReference type="EC" id="6.3.4.13"/>
    </reaction>
</comment>
<comment type="pathway">
    <text>Purine metabolism; IMP biosynthesis via de novo pathway; N(1)-(5-phospho-D-ribosyl)glycinamide from 5-phospho-alpha-D-ribose 1-diphosphate: step 2/2.</text>
</comment>
<comment type="subcellular location">
    <subcellularLocation>
        <location>Plastid</location>
        <location>Chloroplast</location>
    </subcellularLocation>
</comment>
<comment type="similarity">
    <text evidence="1">Belongs to the GARS family.</text>
</comment>
<comment type="sequence caution" evidence="1">
    <conflict type="erroneous initiation">
        <sequence resource="EMBL-CDS" id="CAA52778"/>
    </conflict>
</comment>
<keyword id="KW-0067">ATP-binding</keyword>
<keyword id="KW-0150">Chloroplast</keyword>
<keyword id="KW-0436">Ligase</keyword>
<keyword id="KW-0547">Nucleotide-binding</keyword>
<keyword id="KW-0934">Plastid</keyword>
<keyword id="KW-0658">Purine biosynthesis</keyword>
<keyword id="KW-1185">Reference proteome</keyword>
<keyword id="KW-0809">Transit peptide</keyword>
<feature type="transit peptide" description="Chloroplast" evidence="1">
    <location>
        <begin position="1"/>
        <end position="75"/>
    </location>
</feature>
<feature type="chain" id="PRO_0000029875" description="Phosphoribosylamine--glycine ligase, chloroplastic">
    <location>
        <begin position="76"/>
        <end position="532"/>
    </location>
</feature>
<feature type="domain" description="ATP-grasp">
    <location>
        <begin position="204"/>
        <end position="412"/>
    </location>
</feature>
<feature type="sequence conflict" description="In Ref. 1; CAA52778." evidence="1" ref="1">
    <original>MSSLCASNCYPSSSSINLFSNNNNPTKPFLLSLRFASSNSLPFVAPLKFSTTNHVLSNSRFSSNRIQRRLFLLRCVSEESQPSLSIGNGGS</original>
    <variation>LNPCLRWSESRVLYFDSLPPCRRCVHLIAILHLLLSISSPTTTTQLNPFFSPSDSPPPILFHLLLLSNSLLPITSLVTLVSLRTESKDAFFCSDAFQKNLSRLFLIG</variation>
    <location>
        <begin position="1"/>
        <end position="91"/>
    </location>
</feature>
<feature type="sequence conflict" description="In Ref. 1; CAA52778." evidence="1" ref="1">
    <original>LPKL</original>
    <variation>FLSF</variation>
    <location>
        <begin position="377"/>
        <end position="380"/>
    </location>
</feature>
<feature type="sequence conflict" description="In Ref. 1." evidence="1" ref="1">
    <original>GFFRHDIGWRALRQKQVATKEE</original>
    <variation>RFL</variation>
    <location>
        <begin position="511"/>
        <end position="532"/>
    </location>
</feature>